<keyword id="KW-0067">ATP-binding</keyword>
<keyword id="KW-0963">Cytoplasm</keyword>
<keyword id="KW-0413">Isomerase</keyword>
<keyword id="KW-0479">Metal-binding</keyword>
<keyword id="KW-0547">Nucleotide-binding</keyword>
<keyword id="KW-1185">Reference proteome</keyword>
<evidence type="ECO:0000250" key="1">
    <source>
        <dbReference type="UniProtKB" id="Q97ZZ8"/>
    </source>
</evidence>
<evidence type="ECO:0000255" key="2">
    <source>
        <dbReference type="HAMAP-Rule" id="MF_01125"/>
    </source>
</evidence>
<evidence type="ECO:0000255" key="3">
    <source>
        <dbReference type="PROSITE-ProRule" id="PRU00541"/>
    </source>
</evidence>
<evidence type="ECO:0000255" key="4">
    <source>
        <dbReference type="PROSITE-ProRule" id="PRU00542"/>
    </source>
</evidence>
<evidence type="ECO:0000255" key="5">
    <source>
        <dbReference type="PROSITE-ProRule" id="PRU01380"/>
    </source>
</evidence>
<evidence type="ECO:0000269" key="6">
    <source>
    </source>
</evidence>
<evidence type="ECO:0000269" key="7">
    <source>
    </source>
</evidence>
<evidence type="ECO:0000303" key="8">
    <source>
    </source>
</evidence>
<evidence type="ECO:0000305" key="9"/>
<evidence type="ECO:0000305" key="10">
    <source>
    </source>
</evidence>
<evidence type="ECO:0000312" key="11">
    <source>
        <dbReference type="EMBL" id="AAR39279.1"/>
    </source>
</evidence>
<protein>
    <recommendedName>
        <fullName evidence="9">Reverse gyrse subunit B</fullName>
        <ecNumber evidence="6">5.6.2.-</ecNumber>
    </recommendedName>
    <alternativeName>
        <fullName evidence="8">Helicase-like subunit of reverse gyrase</fullName>
    </alternativeName>
</protein>
<dbReference type="EC" id="5.6.2.-" evidence="6"/>
<dbReference type="EMBL" id="AE017199">
    <property type="protein sequence ID" value="AAR39279.1"/>
    <property type="molecule type" value="Genomic_DNA"/>
</dbReference>
<dbReference type="SMR" id="Q74M79"/>
<dbReference type="STRING" id="228908.NEQ434"/>
<dbReference type="EnsemblBacteria" id="AAR39279">
    <property type="protein sequence ID" value="AAR39279"/>
    <property type="gene ID" value="NEQ434"/>
</dbReference>
<dbReference type="KEGG" id="neq:NEQ434"/>
<dbReference type="PATRIC" id="fig|228908.8.peg.447"/>
<dbReference type="HOGENOM" id="CLU_473824_0_0_2"/>
<dbReference type="BioCyc" id="NEQU228908:GJB6-461-MONOMER"/>
<dbReference type="Proteomes" id="UP000000578">
    <property type="component" value="Chromosome"/>
</dbReference>
<dbReference type="GO" id="GO:0005737">
    <property type="term" value="C:cytoplasm"/>
    <property type="evidence" value="ECO:0007669"/>
    <property type="project" value="UniProtKB-SubCell"/>
</dbReference>
<dbReference type="GO" id="GO:0005524">
    <property type="term" value="F:ATP binding"/>
    <property type="evidence" value="ECO:0007669"/>
    <property type="project" value="UniProtKB-KW"/>
</dbReference>
<dbReference type="GO" id="GO:0003677">
    <property type="term" value="F:DNA binding"/>
    <property type="evidence" value="ECO:0007669"/>
    <property type="project" value="InterPro"/>
</dbReference>
<dbReference type="GO" id="GO:0046872">
    <property type="term" value="F:metal ion binding"/>
    <property type="evidence" value="ECO:0007669"/>
    <property type="project" value="UniProtKB-KW"/>
</dbReference>
<dbReference type="GO" id="GO:0160097">
    <property type="term" value="F:reverse gyrase activity"/>
    <property type="evidence" value="ECO:0000314"/>
    <property type="project" value="UniProtKB"/>
</dbReference>
<dbReference type="GO" id="GO:0006265">
    <property type="term" value="P:DNA topological change"/>
    <property type="evidence" value="ECO:0000314"/>
    <property type="project" value="UniProtKB"/>
</dbReference>
<dbReference type="CDD" id="cd17924">
    <property type="entry name" value="DDXDc_reverse_gyrase"/>
    <property type="match status" value="1"/>
</dbReference>
<dbReference type="CDD" id="cd18798">
    <property type="entry name" value="SF2_C_reverse_gyrase"/>
    <property type="match status" value="1"/>
</dbReference>
<dbReference type="Gene3D" id="3.40.50.300">
    <property type="entry name" value="P-loop containing nucleotide triphosphate hydrolases"/>
    <property type="match status" value="3"/>
</dbReference>
<dbReference type="InterPro" id="IPR011545">
    <property type="entry name" value="DEAD/DEAH_box_helicase_dom"/>
</dbReference>
<dbReference type="InterPro" id="IPR014001">
    <property type="entry name" value="Helicase_ATP-bd"/>
</dbReference>
<dbReference type="InterPro" id="IPR027417">
    <property type="entry name" value="P-loop_NTPase"/>
</dbReference>
<dbReference type="InterPro" id="IPR005736">
    <property type="entry name" value="Reverse_gyrase"/>
</dbReference>
<dbReference type="InterPro" id="IPR040569">
    <property type="entry name" value="Znf_Rg"/>
</dbReference>
<dbReference type="NCBIfam" id="TIGR01054">
    <property type="entry name" value="rgy"/>
    <property type="match status" value="1"/>
</dbReference>
<dbReference type="PANTHER" id="PTHR43505">
    <property type="entry name" value="REVERSE GYRASE"/>
    <property type="match status" value="1"/>
</dbReference>
<dbReference type="PANTHER" id="PTHR43505:SF1">
    <property type="entry name" value="REVERSE GYRASE"/>
    <property type="match status" value="1"/>
</dbReference>
<dbReference type="Pfam" id="PF00270">
    <property type="entry name" value="DEAD"/>
    <property type="match status" value="1"/>
</dbReference>
<dbReference type="Pfam" id="PF17915">
    <property type="entry name" value="zf_Rg"/>
    <property type="match status" value="1"/>
</dbReference>
<dbReference type="SMART" id="SM00487">
    <property type="entry name" value="DEXDc"/>
    <property type="match status" value="1"/>
</dbReference>
<dbReference type="SUPFAM" id="SSF52540">
    <property type="entry name" value="P-loop containing nucleoside triphosphate hydrolases"/>
    <property type="match status" value="2"/>
</dbReference>
<dbReference type="PROSITE" id="PS51192">
    <property type="entry name" value="HELICASE_ATP_BIND_1"/>
    <property type="match status" value="1"/>
</dbReference>
<dbReference type="PROSITE" id="PS51194">
    <property type="entry name" value="HELICASE_CTER"/>
    <property type="match status" value="1"/>
</dbReference>
<dbReference type="PROSITE" id="PS52036">
    <property type="entry name" value="ZF_RG_N"/>
    <property type="match status" value="1"/>
</dbReference>
<organism>
    <name type="scientific">Nanoarchaeum equitans (strain Kin4-M)</name>
    <dbReference type="NCBI Taxonomy" id="228908"/>
    <lineage>
        <taxon>Archaea</taxon>
        <taxon>Nanobdellota</taxon>
        <taxon>Candidatus Nanoarchaeia</taxon>
        <taxon>Nanoarchaeales</taxon>
        <taxon>Nanoarchaeaceae</taxon>
        <taxon>Nanoarchaeum</taxon>
    </lineage>
</organism>
<proteinExistence type="evidence at protein level"/>
<reference evidence="11" key="1">
    <citation type="journal article" date="2003" name="Proc. Natl. Acad. Sci. U.S.A.">
        <title>The genome of Nanoarchaeum equitans: insights into early archaeal evolution and derived parasitism.</title>
        <authorList>
            <person name="Waters E."/>
            <person name="Hohn M.J."/>
            <person name="Ahel I."/>
            <person name="Graham D.E."/>
            <person name="Adams M.D."/>
            <person name="Barnstead M."/>
            <person name="Beeson K.Y."/>
            <person name="Bibbs L."/>
            <person name="Bolanos R."/>
            <person name="Keller M."/>
            <person name="Kretz K."/>
            <person name="Lin X."/>
            <person name="Mathur E."/>
            <person name="Ni J."/>
            <person name="Podar M."/>
            <person name="Richardson T."/>
            <person name="Sutton G.G."/>
            <person name="Simon M."/>
            <person name="Soell D."/>
            <person name="Stetter K.O."/>
            <person name="Short J.M."/>
            <person name="Noorderwier M."/>
        </authorList>
    </citation>
    <scope>NUCLEOTIDE SEQUENCE [LARGE SCALE GENOMIC DNA]</scope>
    <source>
        <strain>Kin4-M</strain>
    </source>
</reference>
<reference key="2">
    <citation type="journal article" date="2010" name="J. Biol. Chem.">
        <title>Separate and combined biochemical activities of the subunits of a naturally split reverse gyrase.</title>
        <authorList>
            <person name="Capp C."/>
            <person name="Qian Y."/>
            <person name="Sage H."/>
            <person name="Huber H."/>
            <person name="Hsieh T.S."/>
        </authorList>
    </citation>
    <scope>FUNCTION</scope>
    <scope>BIOPHYSICOCHEMICAL PROPERTIES</scope>
    <scope>SUBUNIT</scope>
    <scope>DNA-BINDING</scope>
    <source>
        <strain>Kin4-M</strain>
    </source>
</reference>
<sequence length="575" mass="66049">MKIYYNNVCPNCSGRISNERLIKGLPCENDYPYEEGTIEQVYEYLKENNKLKDWANIYNIEKAKKEFEEFFYKAVNNKPWSAQRAWFIRAYKGYSFSIIAPTGMGKTTFALVNALYWGKKGKKVYIIVPTRTLVKQLYEKINVFAERVGFDNIIVAYYGNNKQKKEAKELIKDGAFSILITSNQFLSRNFDLLKNNYFDIIFADDVDSIMKSSKNIDRILYLLGFSETTIEKAMQLIKLKISGKDLEKIRKMEEQLKELVRKEQRGILIAASATGSMRGLRVKLFRELLGFEVGAAKTTIRNIIDVYTEMRDYKKQTLELIKKLGNGGLVFVPTDYGIEKAEEIAQYLKENNIKAEAFYSGKSIELLDKYANKELDVLVGVAHYYGLIVRGIDLPHVVKYAIFVGIPRFRFSAKEKETKIGRILLLASTLSDYADEEFKKKLNTTYNMIKRVSTGALKMVEEAIEQNKELDGFLEELRKNIIYLRDKSFELINREDIIKKLEENPFIALERGDGINILIPDVKTYIQASGRTSRMYPGGITKGLSIILSDNEKLLRALEFKLKLLGIDLHPGSSS</sequence>
<comment type="function">
    <text evidence="7 10">Modifies the topological state of DNA by introducing positive supercoils in an ATP-dependent process (PubMed:20929866). Binds to single-stranded DNA, transiently cleaves and then rejoins the end, introducing a positive supercoil in the process (PubMed:20929866). The scissile phosphodiester is attacked by the catalytic tyrosine of the enzyme, resulting in the formation of a DNA-(5'-phosphotyrosyl)-enzyme intermediate (PubMed:20929866). Probably involved in rewinding DNA strands in regions of the chromosome that have opened up to allow replication, transcription, DNA repair or for DNA protection (Probable) (PubMed:20929866). Reconstituted holoenzyme binds dsDNA a bit better than ssDNA, this subunit preferentially binds dsDNA (PubMed:20929866). In isolation this subunit has DNA-stimulated ATPase activity that is stimulated by topoisomerase-domain containing RgyA (PubMed:20929866). This subunit inhibits the relaxation activity of the topoisomerase subunit while promoting positive supercoiling (PubMed:20929866).</text>
</comment>
<comment type="catalytic activity">
    <reaction evidence="7">
        <text>ATP + H2O = ADP + phosphate + H(+)</text>
        <dbReference type="Rhea" id="RHEA:13065"/>
        <dbReference type="ChEBI" id="CHEBI:15377"/>
        <dbReference type="ChEBI" id="CHEBI:15378"/>
        <dbReference type="ChEBI" id="CHEBI:30616"/>
        <dbReference type="ChEBI" id="CHEBI:43474"/>
        <dbReference type="ChEBI" id="CHEBI:456216"/>
    </reaction>
</comment>
<comment type="biophysicochemical properties">
    <kinetics>
        <KM evidence="7">76.4 uM for ATP in reconstituted holoenzyme</KM>
        <KM evidence="7">197 uM for ATP in this subunit alone</KM>
        <text evidence="7">kcat is 7.99 sec(-1) for holoenzyme and 3.12 sec(-1) for this subunit alone.</text>
    </kinetics>
</comment>
<comment type="subunit">
    <text evidence="7">Heterodimer of an RgyA and RgyB subunit (PubMed:20929866).</text>
</comment>
<comment type="subcellular location">
    <subcellularLocation>
        <location evidence="1">Cytoplasm</location>
    </subcellularLocation>
</comment>
<comment type="domain">
    <text evidence="10">Introduction of positive supercoils requires the cooperation of both the helicase-like and topoisomerase domains of the 2 subunits. The helicase-like domain probably does not directly unwind DNA, but more likely acts by driving ATP-dependent conformational changes within the whole enzyme. A beta hairpin in the 'latch' region of the N-terminal domain plays a regulatory role in the enzyme, repressing topoisomerase activity in the absence of ATP and preventing the enzyme from acting as an ATP-independent relaxing enzyme; it also helps to coordinate nucleotide hydrolysis by the ATPase domain with the supercoiling activity of the topoisomerase domain (PubMed:20929866).</text>
</comment>
<comment type="miscellaneous">
    <text evidence="9">This enzyme is the only unique feature of hyperthermophilic bacteria/archaea known and seems to be essential for adaptation to life at high temperatures. It may play a role in stabilization of DNA at high temperatures.</text>
</comment>
<comment type="similarity">
    <text evidence="9">Belongs to the DEAD box helicase family. DDVD subfamily.</text>
</comment>
<comment type="caution">
    <text evidence="9">Asp-30 is present instead of the conserved Cys residue which is part of a zinc-finger.</text>
</comment>
<accession>Q74M79</accession>
<gene>
    <name evidence="9" type="primary">rgyB</name>
    <name evidence="11" type="ordered locus">NEQ434</name>
</gene>
<name>RGYRB_NANEQ</name>
<feature type="chain" id="PRO_0000459354" description="Reverse gyrse subunit B">
    <location>
        <begin position="1"/>
        <end position="575"/>
    </location>
</feature>
<feature type="domain" description="Helicase ATP-binding" evidence="3">
    <location>
        <begin position="87"/>
        <end position="247"/>
    </location>
</feature>
<feature type="domain" description="Helicase C-terminal" evidence="4">
    <location>
        <begin position="316"/>
        <end position="465"/>
    </location>
</feature>
<feature type="zinc finger region" description="RG N-terminal-type; degenerate" evidence="5">
    <location>
        <begin position="1"/>
        <end position="39"/>
    </location>
</feature>
<feature type="short sequence motif" description="DEAD box" evidence="3">
    <location>
        <begin position="204"/>
        <end position="207"/>
    </location>
</feature>
<feature type="binding site" evidence="2">
    <location>
        <position position="83"/>
    </location>
    <ligand>
        <name>ATP</name>
        <dbReference type="ChEBI" id="CHEBI:30616"/>
    </ligand>
</feature>
<feature type="binding site" evidence="3">
    <location>
        <begin position="100"/>
        <end position="107"/>
    </location>
    <ligand>
        <name>ATP</name>
        <dbReference type="ChEBI" id="CHEBI:30616"/>
    </ligand>
</feature>